<evidence type="ECO:0000255" key="1">
    <source>
        <dbReference type="HAMAP-Rule" id="MF_00507"/>
    </source>
</evidence>
<accession>B8F4V4</accession>
<keyword id="KW-1185">Reference proteome</keyword>
<reference key="1">
    <citation type="journal article" date="2009" name="J. Bacteriol.">
        <title>Complete genome sequence of Haemophilus parasuis SH0165.</title>
        <authorList>
            <person name="Yue M."/>
            <person name="Yang F."/>
            <person name="Yang J."/>
            <person name="Bei W."/>
            <person name="Cai X."/>
            <person name="Chen L."/>
            <person name="Dong J."/>
            <person name="Zhou R."/>
            <person name="Jin M."/>
            <person name="Jin Q."/>
            <person name="Chen H."/>
        </authorList>
    </citation>
    <scope>NUCLEOTIDE SEQUENCE [LARGE SCALE GENOMIC DNA]</scope>
    <source>
        <strain>SH0165</strain>
    </source>
</reference>
<gene>
    <name type="ordered locus">HAPS_0710</name>
</gene>
<dbReference type="EMBL" id="CP001321">
    <property type="protein sequence ID" value="ACL32356.1"/>
    <property type="molecule type" value="Genomic_DNA"/>
</dbReference>
<dbReference type="RefSeq" id="WP_012621877.1">
    <property type="nucleotide sequence ID" value="NC_011852.1"/>
</dbReference>
<dbReference type="SMR" id="B8F4V4"/>
<dbReference type="STRING" id="557723.HAPS_0710"/>
<dbReference type="KEGG" id="hap:HAPS_0710"/>
<dbReference type="HOGENOM" id="CLU_185263_1_1_6"/>
<dbReference type="Proteomes" id="UP000006743">
    <property type="component" value="Chromosome"/>
</dbReference>
<dbReference type="HAMAP" id="MF_00507">
    <property type="entry name" value="UPF0181"/>
    <property type="match status" value="1"/>
</dbReference>
<dbReference type="InterPro" id="IPR005371">
    <property type="entry name" value="UPF0181"/>
</dbReference>
<dbReference type="NCBIfam" id="NF003476">
    <property type="entry name" value="PRK05114.1"/>
    <property type="match status" value="1"/>
</dbReference>
<dbReference type="Pfam" id="PF03701">
    <property type="entry name" value="UPF0181"/>
    <property type="match status" value="1"/>
</dbReference>
<name>Y710_GLAP5</name>
<sequence length="51" mass="5728">MDNTLLSLTHEQQQQAVQQIQQLVQQGISSGEAIAIVAQQLRDTHQKSEEK</sequence>
<organism>
    <name type="scientific">Glaesserella parasuis serovar 5 (strain SH0165)</name>
    <name type="common">Haemophilus parasuis</name>
    <dbReference type="NCBI Taxonomy" id="557723"/>
    <lineage>
        <taxon>Bacteria</taxon>
        <taxon>Pseudomonadati</taxon>
        <taxon>Pseudomonadota</taxon>
        <taxon>Gammaproteobacteria</taxon>
        <taxon>Pasteurellales</taxon>
        <taxon>Pasteurellaceae</taxon>
        <taxon>Glaesserella</taxon>
    </lineage>
</organism>
<feature type="chain" id="PRO_1000197848" description="UPF0181 protein HAPS_0710">
    <location>
        <begin position="1"/>
        <end position="51"/>
    </location>
</feature>
<proteinExistence type="inferred from homology"/>
<comment type="similarity">
    <text evidence="1">Belongs to the UPF0181 family.</text>
</comment>
<protein>
    <recommendedName>
        <fullName evidence="1">UPF0181 protein HAPS_0710</fullName>
    </recommendedName>
</protein>